<proteinExistence type="predicted"/>
<organism>
    <name type="scientific">Haemophilus influenzae (strain ATCC 51907 / DSM 11121 / KW20 / Rd)</name>
    <dbReference type="NCBI Taxonomy" id="71421"/>
    <lineage>
        <taxon>Bacteria</taxon>
        <taxon>Pseudomonadati</taxon>
        <taxon>Pseudomonadota</taxon>
        <taxon>Gammaproteobacteria</taxon>
        <taxon>Pasteurellales</taxon>
        <taxon>Pasteurellaceae</taxon>
        <taxon>Haemophilus</taxon>
    </lineage>
</organism>
<keyword id="KW-1185">Reference proteome</keyword>
<name>Y1469_HAEIN</name>
<gene>
    <name type="ordered locus">HI_1469</name>
</gene>
<accession>P44205</accession>
<sequence length="115" mass="13064">MESITVFSAGSFCYALQELSDIFRQIHHIEIKAFCGPAGILRQQIEQGNRGDIFISANPGNVLQLADSKKIYQKLTIAFNQLALTTLNLEHFRHKSIFELLFDRSFLGVKNVSKY</sequence>
<feature type="chain" id="PRO_0000078064" description="Uncharacterized protein HI_1469">
    <location>
        <begin position="1"/>
        <end position="115"/>
    </location>
</feature>
<reference key="1">
    <citation type="journal article" date="1995" name="Science">
        <title>Whole-genome random sequencing and assembly of Haemophilus influenzae Rd.</title>
        <authorList>
            <person name="Fleischmann R.D."/>
            <person name="Adams M.D."/>
            <person name="White O."/>
            <person name="Clayton R.A."/>
            <person name="Kirkness E.F."/>
            <person name="Kerlavage A.R."/>
            <person name="Bult C.J."/>
            <person name="Tomb J.-F."/>
            <person name="Dougherty B.A."/>
            <person name="Merrick J.M."/>
            <person name="McKenney K."/>
            <person name="Sutton G.G."/>
            <person name="FitzHugh W."/>
            <person name="Fields C.A."/>
            <person name="Gocayne J.D."/>
            <person name="Scott J.D."/>
            <person name="Shirley R."/>
            <person name="Liu L.-I."/>
            <person name="Glodek A."/>
            <person name="Kelley J.M."/>
            <person name="Weidman J.F."/>
            <person name="Phillips C.A."/>
            <person name="Spriggs T."/>
            <person name="Hedblom E."/>
            <person name="Cotton M.D."/>
            <person name="Utterback T.R."/>
            <person name="Hanna M.C."/>
            <person name="Nguyen D.T."/>
            <person name="Saudek D.M."/>
            <person name="Brandon R.C."/>
            <person name="Fine L.D."/>
            <person name="Fritchman J.L."/>
            <person name="Fuhrmann J.L."/>
            <person name="Geoghagen N.S.M."/>
            <person name="Gnehm C.L."/>
            <person name="McDonald L.A."/>
            <person name="Small K.V."/>
            <person name="Fraser C.M."/>
            <person name="Smith H.O."/>
            <person name="Venter J.C."/>
        </authorList>
    </citation>
    <scope>NUCLEOTIDE SEQUENCE [LARGE SCALE GENOMIC DNA]</scope>
    <source>
        <strain>ATCC 51907 / DSM 11121 / KW20 / Rd</strain>
    </source>
</reference>
<protein>
    <recommendedName>
        <fullName>Uncharacterized protein HI_1469</fullName>
    </recommendedName>
</protein>
<dbReference type="EMBL" id="L42023">
    <property type="protein sequence ID" value="AAC23127.1"/>
    <property type="molecule type" value="Genomic_DNA"/>
</dbReference>
<dbReference type="PIR" id="H64030">
    <property type="entry name" value="H64030"/>
</dbReference>
<dbReference type="SMR" id="P44205"/>
<dbReference type="STRING" id="71421.HI_1469"/>
<dbReference type="EnsemblBacteria" id="AAC23127">
    <property type="protein sequence ID" value="AAC23127"/>
    <property type="gene ID" value="HI_1469"/>
</dbReference>
<dbReference type="KEGG" id="hin:HI_1469"/>
<dbReference type="eggNOG" id="COG0725">
    <property type="taxonomic scope" value="Bacteria"/>
</dbReference>
<dbReference type="HOGENOM" id="CLU_2105534_0_0_6"/>
<dbReference type="Proteomes" id="UP000000579">
    <property type="component" value="Chromosome"/>
</dbReference>
<dbReference type="GO" id="GO:0030288">
    <property type="term" value="C:outer membrane-bounded periplasmic space"/>
    <property type="evidence" value="ECO:0000318"/>
    <property type="project" value="GO_Central"/>
</dbReference>
<dbReference type="GO" id="GO:0030973">
    <property type="term" value="F:molybdate ion binding"/>
    <property type="evidence" value="ECO:0000318"/>
    <property type="project" value="GO_Central"/>
</dbReference>
<dbReference type="GO" id="GO:0015689">
    <property type="term" value="P:molybdate ion transport"/>
    <property type="evidence" value="ECO:0000318"/>
    <property type="project" value="GO_Central"/>
</dbReference>
<dbReference type="Gene3D" id="3.40.190.10">
    <property type="entry name" value="Periplasmic binding protein-like II"/>
    <property type="match status" value="1"/>
</dbReference>
<dbReference type="InterPro" id="IPR050682">
    <property type="entry name" value="ModA/WtpA"/>
</dbReference>
<dbReference type="PANTHER" id="PTHR30632">
    <property type="entry name" value="MOLYBDATE-BINDING PERIPLASMIC PROTEIN"/>
    <property type="match status" value="1"/>
</dbReference>
<dbReference type="PANTHER" id="PTHR30632:SF17">
    <property type="entry name" value="MOLYBDATE-BINDING PROTEIN MODA"/>
    <property type="match status" value="1"/>
</dbReference>
<dbReference type="Pfam" id="PF13531">
    <property type="entry name" value="SBP_bac_11"/>
    <property type="match status" value="1"/>
</dbReference>
<dbReference type="SUPFAM" id="SSF53850">
    <property type="entry name" value="Periplasmic binding protein-like II"/>
    <property type="match status" value="1"/>
</dbReference>